<feature type="chain" id="PRO_0000353586" description="DNA-directed RNA polymerase subunit beta''">
    <location>
        <begin position="1"/>
        <end position="1297"/>
    </location>
</feature>
<feature type="region of interest" description="Disordered" evidence="2">
    <location>
        <begin position="1278"/>
        <end position="1297"/>
    </location>
</feature>
<feature type="compositionally biased region" description="Basic residues" evidence="2">
    <location>
        <begin position="1278"/>
        <end position="1288"/>
    </location>
</feature>
<feature type="binding site" evidence="1">
    <location>
        <position position="220"/>
    </location>
    <ligand>
        <name>Zn(2+)</name>
        <dbReference type="ChEBI" id="CHEBI:29105"/>
    </ligand>
</feature>
<feature type="binding site" evidence="1">
    <location>
        <position position="293"/>
    </location>
    <ligand>
        <name>Zn(2+)</name>
        <dbReference type="ChEBI" id="CHEBI:29105"/>
    </ligand>
</feature>
<feature type="binding site" evidence="1">
    <location>
        <position position="300"/>
    </location>
    <ligand>
        <name>Zn(2+)</name>
        <dbReference type="ChEBI" id="CHEBI:29105"/>
    </ligand>
</feature>
<feature type="binding site" evidence="1">
    <location>
        <position position="303"/>
    </location>
    <ligand>
        <name>Zn(2+)</name>
        <dbReference type="ChEBI" id="CHEBI:29105"/>
    </ligand>
</feature>
<accession>B2Y1V7</accession>
<accession>B7ZI51</accession>
<gene>
    <name evidence="1" type="primary">rpoC2</name>
</gene>
<dbReference type="EC" id="2.7.7.6" evidence="1"/>
<dbReference type="EMBL" id="EU342371">
    <property type="protein sequence ID" value="ABY26787.1"/>
    <property type="molecule type" value="Genomic_DNA"/>
</dbReference>
<dbReference type="EMBL" id="AP009568">
    <property type="protein sequence ID" value="BAH11231.1"/>
    <property type="molecule type" value="Genomic_DNA"/>
</dbReference>
<dbReference type="RefSeq" id="YP_001876574.1">
    <property type="nucleotide sequence ID" value="NC_010654.1"/>
</dbReference>
<dbReference type="SMR" id="B2Y1V7"/>
<dbReference type="GeneID" id="6276210"/>
<dbReference type="GO" id="GO:0009507">
    <property type="term" value="C:chloroplast"/>
    <property type="evidence" value="ECO:0007669"/>
    <property type="project" value="UniProtKB-SubCell"/>
</dbReference>
<dbReference type="GO" id="GO:0000428">
    <property type="term" value="C:DNA-directed RNA polymerase complex"/>
    <property type="evidence" value="ECO:0007669"/>
    <property type="project" value="UniProtKB-KW"/>
</dbReference>
<dbReference type="GO" id="GO:0005739">
    <property type="term" value="C:mitochondrion"/>
    <property type="evidence" value="ECO:0007669"/>
    <property type="project" value="GOC"/>
</dbReference>
<dbReference type="GO" id="GO:0003677">
    <property type="term" value="F:DNA binding"/>
    <property type="evidence" value="ECO:0007669"/>
    <property type="project" value="UniProtKB-UniRule"/>
</dbReference>
<dbReference type="GO" id="GO:0003899">
    <property type="term" value="F:DNA-directed RNA polymerase activity"/>
    <property type="evidence" value="ECO:0007669"/>
    <property type="project" value="UniProtKB-UniRule"/>
</dbReference>
<dbReference type="GO" id="GO:0008270">
    <property type="term" value="F:zinc ion binding"/>
    <property type="evidence" value="ECO:0007669"/>
    <property type="project" value="UniProtKB-UniRule"/>
</dbReference>
<dbReference type="GO" id="GO:0006351">
    <property type="term" value="P:DNA-templated transcription"/>
    <property type="evidence" value="ECO:0007669"/>
    <property type="project" value="UniProtKB-UniRule"/>
</dbReference>
<dbReference type="CDD" id="cd02655">
    <property type="entry name" value="RNAP_beta'_C"/>
    <property type="match status" value="1"/>
</dbReference>
<dbReference type="Gene3D" id="1.10.132.30">
    <property type="match status" value="1"/>
</dbReference>
<dbReference type="Gene3D" id="1.10.150.390">
    <property type="match status" value="1"/>
</dbReference>
<dbReference type="Gene3D" id="1.10.1790.20">
    <property type="match status" value="1"/>
</dbReference>
<dbReference type="Gene3D" id="1.10.274.100">
    <property type="entry name" value="RNA polymerase Rpb1, domain 3"/>
    <property type="match status" value="1"/>
</dbReference>
<dbReference type="HAMAP" id="MF_01324">
    <property type="entry name" value="RNApol_bact_RpoC2"/>
    <property type="match status" value="1"/>
</dbReference>
<dbReference type="InterPro" id="IPR012756">
    <property type="entry name" value="DNA-dir_RpoC2_beta_pp"/>
</dbReference>
<dbReference type="InterPro" id="IPR050254">
    <property type="entry name" value="RNA_pol_beta''_euk"/>
</dbReference>
<dbReference type="InterPro" id="IPR042102">
    <property type="entry name" value="RNA_pol_Rpb1_3_sf"/>
</dbReference>
<dbReference type="InterPro" id="IPR007083">
    <property type="entry name" value="RNA_pol_Rpb1_4"/>
</dbReference>
<dbReference type="InterPro" id="IPR007081">
    <property type="entry name" value="RNA_pol_Rpb1_5"/>
</dbReference>
<dbReference type="InterPro" id="IPR038120">
    <property type="entry name" value="Rpb1_funnel_sf"/>
</dbReference>
<dbReference type="NCBIfam" id="TIGR02388">
    <property type="entry name" value="rpoC2_cyan"/>
    <property type="match status" value="1"/>
</dbReference>
<dbReference type="PANTHER" id="PTHR34995">
    <property type="entry name" value="DNA-DIRECTED RNA POLYMERASE SUBUNIT BETA"/>
    <property type="match status" value="1"/>
</dbReference>
<dbReference type="PANTHER" id="PTHR34995:SF1">
    <property type="entry name" value="DNA-DIRECTED RNA POLYMERASE SUBUNIT BETA"/>
    <property type="match status" value="1"/>
</dbReference>
<dbReference type="Pfam" id="PF05000">
    <property type="entry name" value="RNA_pol_Rpb1_4"/>
    <property type="match status" value="1"/>
</dbReference>
<dbReference type="Pfam" id="PF04998">
    <property type="entry name" value="RNA_pol_Rpb1_5"/>
    <property type="match status" value="2"/>
</dbReference>
<dbReference type="SUPFAM" id="SSF64484">
    <property type="entry name" value="beta and beta-prime subunits of DNA dependent RNA-polymerase"/>
    <property type="match status" value="1"/>
</dbReference>
<evidence type="ECO:0000255" key="1">
    <source>
        <dbReference type="HAMAP-Rule" id="MF_01324"/>
    </source>
</evidence>
<evidence type="ECO:0000256" key="2">
    <source>
        <dbReference type="SAM" id="MobiDB-lite"/>
    </source>
</evidence>
<sequence length="1297" mass="149498">MKLKKQIRFYNKAMSRTALNELIRRLIDRFGMMCTSHILDQLKTLGFHQATDASFSLGIDDLLAAPSKWWLVKEEDQQGFFSEKQNLSGNLHTVETLRQLMERWHTTSEYLKEEMYPKFQLTNSFNPVYMMSFSGARGNKSQVHQLLGIRGLMSDPQGKIVDLPIQGNFQEGLSLTEYIISSYGARKGVVDTAVRTADAGYLTRRLVEVVQHIIVRKTDCGTTQGIFISPIQDRDRSKENVFLQKITGRVLADDVYINRRCIATRNQDISAGLANQFKNLLIQAISIRTPFTCKSLSWICQLCYGRSLSHNNLIELGEAVGIIAGQSIGEPGTQLTLRTFHTGGVFTGNIVGTIRAPFNGRIQFNSNLVYSTRTFFGHPAFICRKKLFIIIDDGGDKVDYSLLPTKSWVFVQNHQYVESEQLIGEFRTTTSLLKEKVLKYIYSELNGEMHWSTFVCHALKHTQGNAHFTFGAVHLWILSGGIYNPKVVLSFPFPKDQDQVTIAFLSTKQKNCFDPSVNLLQSNSVSFQNPKLEEEKLEEEKLEEEPDQSSISVPIFLENFNIQGKKQINRVLVPFFYAPKRKTKRKKRKNYPNCILKIPRSGFLHRNTTFCIWNDSQYKSPSPGFLEYSDSPEKFVLIPEEVHFFEKSSPIAIQNKSIIRADTQITAKKKSQVGGLVQIHKKKTKLVVKILPGYIDFYRKKNKKYWYKTFVSPRQNLGEDFLSEKNYFQTLNKPHRKKSFVLLRTAVEYKIPNPKEIKVPFCPDLLREEDNLHIQMSNCFYGDGGKKLQKGIQLIQTCLIFNWEQIDSTESETSISITSIRIKNIVINTIQFSLRKHSDSAWSQKKNQISSKRTFPPVLDKTQSFSLSGKIQLPSNYTATFRSLNNEKNMFLILSTSDCFRIHLFQTKKNDNIQNKSNPNKPINNHFVGFFGHLHSIENLYPSSHFLNYNKILFNKFCYNFNIFEIPNCYILDEFQKVLIYPRINHLWNPKKMRYRRYSKNRYPTMNLGQLLWENFAICKNESFSESGQIIAVREESLVVRLAKPYLATPKATIHGNFAEIINQGDPLITFFYERFKSSDITQGLPKVEQLAEAQSNNPVVQNIEENFRIWNQDMTRTFGSFWGLFISTKITMEQGRIHFVDQIQKVYQSQGVHICEKHIELIIRQMTSRVLVSDDVIFNVFLPGELIGLSRAQRIDRAFDEAIHYKTKLLGITKASFDTPSFISEASFQETARVLAKAAIQGRIDWLKGLKENVILSNIIPAGTGKKTNYSLFARRRRRKQNTKTRKNNLFSLNEK</sequence>
<protein>
    <recommendedName>
        <fullName evidence="1">DNA-directed RNA polymerase subunit beta''</fullName>
        <ecNumber evidence="1">2.7.7.6</ecNumber>
    </recommendedName>
    <alternativeName>
        <fullName evidence="1">PEP</fullName>
    </alternativeName>
    <alternativeName>
        <fullName evidence="1">Plastid-encoded RNA polymerase subunit beta''</fullName>
        <shortName evidence="1">RNA polymerase subunit beta''</shortName>
    </alternativeName>
</protein>
<geneLocation type="chloroplast"/>
<proteinExistence type="inferred from homology"/>
<organism>
    <name type="scientific">Welwitschia mirabilis</name>
    <name type="common">Tree tumbo</name>
    <name type="synonym">Welwitschia bainesii</name>
    <dbReference type="NCBI Taxonomy" id="3377"/>
    <lineage>
        <taxon>Eukaryota</taxon>
        <taxon>Viridiplantae</taxon>
        <taxon>Streptophyta</taxon>
        <taxon>Embryophyta</taxon>
        <taxon>Tracheophyta</taxon>
        <taxon>Spermatophyta</taxon>
        <taxon>Gnetopsida</taxon>
        <taxon>Gnetidae</taxon>
        <taxon>Welwitschiales</taxon>
        <taxon>Welwitschiaceae</taxon>
        <taxon>Welwitschia</taxon>
    </lineage>
</organism>
<name>RPOC2_WELMI</name>
<reference key="1">
    <citation type="journal article" date="2008" name="BMC Evol. Biol.">
        <title>The complete plastid genome sequence of Welwitschia mirabilis: an unusually compact plastome with accelerated divergence rates.</title>
        <authorList>
            <person name="McCoy S.R."/>
            <person name="Kuehl J.V."/>
            <person name="Boore J.L."/>
            <person name="Raubeson L.A."/>
        </authorList>
    </citation>
    <scope>NUCLEOTIDE SEQUENCE [LARGE SCALE GENOMIC DNA]</scope>
</reference>
<reference key="2">
    <citation type="journal article" date="2009" name="Mol. Phylogenet. Evol.">
        <title>Evolution of reduced and compact chloroplast genomes (cpDNAs) in gnetophytes: Selection toward a lower-cost strategy.</title>
        <authorList>
            <person name="Wu C.-S."/>
            <person name="Lai Y.-T."/>
            <person name="Lin C.-P."/>
            <person name="Wang Y.-N."/>
            <person name="Chaw S.-M."/>
        </authorList>
    </citation>
    <scope>NUCLEOTIDE SEQUENCE [LARGE SCALE GENOMIC DNA]</scope>
</reference>
<keyword id="KW-0150">Chloroplast</keyword>
<keyword id="KW-0240">DNA-directed RNA polymerase</keyword>
<keyword id="KW-0479">Metal-binding</keyword>
<keyword id="KW-0548">Nucleotidyltransferase</keyword>
<keyword id="KW-0934">Plastid</keyword>
<keyword id="KW-0804">Transcription</keyword>
<keyword id="KW-0808">Transferase</keyword>
<keyword id="KW-0862">Zinc</keyword>
<comment type="function">
    <text evidence="1">DNA-dependent RNA polymerase catalyzes the transcription of DNA into RNA using the four ribonucleoside triphosphates as substrates.</text>
</comment>
<comment type="catalytic activity">
    <reaction evidence="1">
        <text>RNA(n) + a ribonucleoside 5'-triphosphate = RNA(n+1) + diphosphate</text>
        <dbReference type="Rhea" id="RHEA:21248"/>
        <dbReference type="Rhea" id="RHEA-COMP:14527"/>
        <dbReference type="Rhea" id="RHEA-COMP:17342"/>
        <dbReference type="ChEBI" id="CHEBI:33019"/>
        <dbReference type="ChEBI" id="CHEBI:61557"/>
        <dbReference type="ChEBI" id="CHEBI:140395"/>
        <dbReference type="EC" id="2.7.7.6"/>
    </reaction>
</comment>
<comment type="cofactor">
    <cofactor evidence="1">
        <name>Zn(2+)</name>
        <dbReference type="ChEBI" id="CHEBI:29105"/>
    </cofactor>
    <text evidence="1">Binds 1 Zn(2+) ion per subunit.</text>
</comment>
<comment type="subunit">
    <text evidence="1">In plastids the minimal PEP RNA polymerase catalytic core is composed of four subunits: alpha, beta, beta', and beta''. When a (nuclear-encoded) sigma factor is associated with the core the holoenzyme is formed, which can initiate transcription.</text>
</comment>
<comment type="subcellular location">
    <subcellularLocation>
        <location evidence="1">Plastid</location>
        <location evidence="1">Chloroplast</location>
    </subcellularLocation>
</comment>
<comment type="similarity">
    <text evidence="1">Belongs to the RNA polymerase beta' chain family. RpoC2 subfamily.</text>
</comment>